<protein>
    <recommendedName>
        <fullName evidence="1">UPF0200 protein SSO1041</fullName>
    </recommendedName>
</protein>
<dbReference type="EMBL" id="AE006641">
    <property type="protein sequence ID" value="AAK41303.1"/>
    <property type="molecule type" value="Genomic_DNA"/>
</dbReference>
<dbReference type="PIR" id="H90255">
    <property type="entry name" value="H90255"/>
</dbReference>
<dbReference type="RefSeq" id="WP_009989191.1">
    <property type="nucleotide sequence ID" value="NC_002754.1"/>
</dbReference>
<dbReference type="PDB" id="3H0K">
    <property type="method" value="X-ray"/>
    <property type="resolution" value="3.25 A"/>
    <property type="chains" value="A/B=9-186"/>
</dbReference>
<dbReference type="PDB" id="3LW7">
    <property type="method" value="X-ray"/>
    <property type="resolution" value="2.30 A"/>
    <property type="chains" value="A/B=8-186"/>
</dbReference>
<dbReference type="PDBsum" id="3H0K"/>
<dbReference type="PDBsum" id="3LW7"/>
<dbReference type="SMR" id="Q97Z90"/>
<dbReference type="FunCoup" id="Q97Z90">
    <property type="interactions" value="19"/>
</dbReference>
<dbReference type="STRING" id="273057.SSO1041"/>
<dbReference type="PaxDb" id="273057-SSO1041"/>
<dbReference type="EnsemblBacteria" id="AAK41303">
    <property type="protein sequence ID" value="AAK41303"/>
    <property type="gene ID" value="SSO1041"/>
</dbReference>
<dbReference type="KEGG" id="sso:SSO1041"/>
<dbReference type="PATRIC" id="fig|273057.12.peg.1035"/>
<dbReference type="eggNOG" id="arCOG01045">
    <property type="taxonomic scope" value="Archaea"/>
</dbReference>
<dbReference type="HOGENOM" id="CLU_096329_1_0_2"/>
<dbReference type="InParanoid" id="Q97Z90"/>
<dbReference type="PhylomeDB" id="Q97Z90"/>
<dbReference type="EvolutionaryTrace" id="Q97Z90"/>
<dbReference type="Proteomes" id="UP000001974">
    <property type="component" value="Chromosome"/>
</dbReference>
<dbReference type="GO" id="GO:0005524">
    <property type="term" value="F:ATP binding"/>
    <property type="evidence" value="ECO:0007669"/>
    <property type="project" value="UniProtKB-UniRule"/>
</dbReference>
<dbReference type="CDD" id="cd02022">
    <property type="entry name" value="DPCK"/>
    <property type="match status" value="1"/>
</dbReference>
<dbReference type="Gene3D" id="3.40.50.300">
    <property type="entry name" value="P-loop containing nucleotide triphosphate hydrolases"/>
    <property type="match status" value="1"/>
</dbReference>
<dbReference type="HAMAP" id="MF_01111">
    <property type="entry name" value="UPF0200"/>
    <property type="match status" value="1"/>
</dbReference>
<dbReference type="InterPro" id="IPR022970">
    <property type="entry name" value="NTP_hydrolase-rel"/>
</dbReference>
<dbReference type="InterPro" id="IPR027417">
    <property type="entry name" value="P-loop_NTPase"/>
</dbReference>
<dbReference type="PANTHER" id="PTHR41930:SF1">
    <property type="entry name" value="DEPHOSPHO-COA KINASE"/>
    <property type="match status" value="1"/>
</dbReference>
<dbReference type="PANTHER" id="PTHR41930">
    <property type="entry name" value="UPF0200 PROTEIN MJ1399"/>
    <property type="match status" value="1"/>
</dbReference>
<dbReference type="Pfam" id="PF13238">
    <property type="entry name" value="AAA_18"/>
    <property type="match status" value="1"/>
</dbReference>
<dbReference type="SUPFAM" id="SSF52540">
    <property type="entry name" value="P-loop containing nucleoside triphosphate hydrolases"/>
    <property type="match status" value="1"/>
</dbReference>
<accession>Q97Z90</accession>
<reference key="1">
    <citation type="journal article" date="2001" name="Proc. Natl. Acad. Sci. U.S.A.">
        <title>The complete genome of the crenarchaeon Sulfolobus solfataricus P2.</title>
        <authorList>
            <person name="She Q."/>
            <person name="Singh R.K."/>
            <person name="Confalonieri F."/>
            <person name="Zivanovic Y."/>
            <person name="Allard G."/>
            <person name="Awayez M.J."/>
            <person name="Chan-Weiher C.C.-Y."/>
            <person name="Clausen I.G."/>
            <person name="Curtis B.A."/>
            <person name="De Moors A."/>
            <person name="Erauso G."/>
            <person name="Fletcher C."/>
            <person name="Gordon P.M.K."/>
            <person name="Heikamp-de Jong I."/>
            <person name="Jeffries A.C."/>
            <person name="Kozera C.J."/>
            <person name="Medina N."/>
            <person name="Peng X."/>
            <person name="Thi-Ngoc H.P."/>
            <person name="Redder P."/>
            <person name="Schenk M.E."/>
            <person name="Theriault C."/>
            <person name="Tolstrup N."/>
            <person name="Charlebois R.L."/>
            <person name="Doolittle W.F."/>
            <person name="Duguet M."/>
            <person name="Gaasterland T."/>
            <person name="Garrett R.A."/>
            <person name="Ragan M.A."/>
            <person name="Sensen C.W."/>
            <person name="Van der Oost J."/>
        </authorList>
    </citation>
    <scope>NUCLEOTIDE SEQUENCE [LARGE SCALE GENOMIC DNA]</scope>
    <source>
        <strain>ATCC 35092 / DSM 1617 / JCM 11322 / P2</strain>
    </source>
</reference>
<gene>
    <name type="ordered locus">SSO1041</name>
</gene>
<feature type="chain" id="PRO_0000094534" description="UPF0200 protein SSO1041">
    <location>
        <begin position="1"/>
        <end position="188"/>
    </location>
</feature>
<feature type="binding site" evidence="1">
    <location>
        <begin position="15"/>
        <end position="22"/>
    </location>
    <ligand>
        <name>ATP</name>
        <dbReference type="ChEBI" id="CHEBI:30616"/>
    </ligand>
</feature>
<feature type="strand" evidence="2">
    <location>
        <begin position="10"/>
        <end position="14"/>
    </location>
</feature>
<feature type="helix" evidence="2">
    <location>
        <begin position="21"/>
        <end position="30"/>
    </location>
</feature>
<feature type="strand" evidence="2">
    <location>
        <begin position="34"/>
        <end position="37"/>
    </location>
</feature>
<feature type="helix" evidence="2">
    <location>
        <begin position="38"/>
        <end position="49"/>
    </location>
</feature>
<feature type="helix" evidence="2">
    <location>
        <begin position="56"/>
        <end position="67"/>
    </location>
</feature>
<feature type="helix" evidence="2">
    <location>
        <begin position="71"/>
        <end position="80"/>
    </location>
</feature>
<feature type="strand" evidence="2">
    <location>
        <begin position="88"/>
        <end position="91"/>
    </location>
</feature>
<feature type="helix" evidence="2">
    <location>
        <begin position="96"/>
        <end position="106"/>
    </location>
</feature>
<feature type="strand" evidence="2">
    <location>
        <begin position="110"/>
        <end position="116"/>
    </location>
</feature>
<feature type="helix" evidence="2">
    <location>
        <begin position="119"/>
        <end position="127"/>
    </location>
</feature>
<feature type="helix" evidence="2">
    <location>
        <begin position="138"/>
        <end position="151"/>
    </location>
</feature>
<feature type="helix" evidence="2">
    <location>
        <begin position="153"/>
        <end position="158"/>
    </location>
</feature>
<feature type="strand" evidence="2">
    <location>
        <begin position="161"/>
        <end position="165"/>
    </location>
</feature>
<feature type="helix" evidence="2">
    <location>
        <begin position="170"/>
        <end position="184"/>
    </location>
</feature>
<keyword id="KW-0002">3D-structure</keyword>
<keyword id="KW-0067">ATP-binding</keyword>
<keyword id="KW-0547">Nucleotide-binding</keyword>
<keyword id="KW-1185">Reference proteome</keyword>
<name>Y1041_SACS2</name>
<evidence type="ECO:0000255" key="1">
    <source>
        <dbReference type="HAMAP-Rule" id="MF_01111"/>
    </source>
</evidence>
<evidence type="ECO:0007829" key="2">
    <source>
        <dbReference type="PDB" id="3LW7"/>
    </source>
</evidence>
<sequence>MSYLVVTIKVILITGMPGSGKSEFAKLLKERGAKVIVMSDVVRKRYSIEAKPGERLMDFAKRLREIYGDGVVARLCVEELGTSNHDLVVFDGVRSLAEVEEFKRLLGDSVYIVAVHSPPKIRYKRMIERLRSDDSKEISELIRRDREELKLGIGEVIAMADYIITNDSNYEEFKRRCEEVTDRVLKNG</sequence>
<comment type="similarity">
    <text evidence="1">Belongs to the UPF0200 family.</text>
</comment>
<organism>
    <name type="scientific">Saccharolobus solfataricus (strain ATCC 35092 / DSM 1617 / JCM 11322 / P2)</name>
    <name type="common">Sulfolobus solfataricus</name>
    <dbReference type="NCBI Taxonomy" id="273057"/>
    <lineage>
        <taxon>Archaea</taxon>
        <taxon>Thermoproteota</taxon>
        <taxon>Thermoprotei</taxon>
        <taxon>Sulfolobales</taxon>
        <taxon>Sulfolobaceae</taxon>
        <taxon>Saccharolobus</taxon>
    </lineage>
</organism>
<proteinExistence type="evidence at protein level"/>